<protein>
    <recommendedName>
        <fullName evidence="12">Glucose-1-phosphate adenylyltransferase small subunit 2, chloroplastic/amyloplastic/cytosolic</fullName>
        <shortName evidence="8">OsAGPS2</shortName>
        <shortName evidence="7">OsAPS2</shortName>
        <ecNumber evidence="5">2.7.7.27</ecNumber>
    </recommendedName>
    <alternativeName>
        <fullName evidence="12">ADP-glucose pyrophosphorylase AGPS2</fullName>
    </alternativeName>
    <alternativeName>
        <fullName evidence="12">ADP-glucose synthase AGPS2</fullName>
    </alternativeName>
    <alternativeName>
        <fullName>AGPase B</fullName>
    </alternativeName>
    <alternativeName>
        <fullName>Alpha-D-glucose-1-phosphate adenyl transferase</fullName>
    </alternativeName>
    <alternativeName>
        <fullName evidence="8">OsAGPS2a</fullName>
    </alternativeName>
    <alternativeName>
        <fullName evidence="8">OsAGPS2b</fullName>
    </alternativeName>
</protein>
<keyword id="KW-0021">Allosteric enzyme</keyword>
<keyword id="KW-0025">Alternative splicing</keyword>
<keyword id="KW-0035">Amyloplast</keyword>
<keyword id="KW-0067">ATP-binding</keyword>
<keyword id="KW-0150">Chloroplast</keyword>
<keyword id="KW-0963">Cytoplasm</keyword>
<keyword id="KW-0547">Nucleotide-binding</keyword>
<keyword id="KW-0548">Nucleotidyltransferase</keyword>
<keyword id="KW-0934">Plastid</keyword>
<keyword id="KW-1185">Reference proteome</keyword>
<keyword id="KW-0750">Starch biosynthesis</keyword>
<keyword id="KW-0808">Transferase</keyword>
<keyword id="KW-0809">Transit peptide</keyword>
<reference key="1">
    <citation type="journal article" date="1989" name="J. Biol. Chem.">
        <title>The encoded primary sequence of a rice seed ADP-glucose pyrophosphorylase subunit and its homology to the bacterial enzyme.</title>
        <authorList>
            <person name="Anderson J.M."/>
            <person name="Hnilo J."/>
            <person name="Larson R."/>
            <person name="Okita T.W."/>
            <person name="Morell M."/>
            <person name="Preiss J."/>
        </authorList>
    </citation>
    <scope>NUCLEOTIDE SEQUENCE [MRNA] (ISOFORM 2)</scope>
    <source>
        <tissue>Endosperm</tissue>
    </source>
</reference>
<reference key="2">
    <citation type="journal article" date="1991" name="Gene">
        <title>Molecular characterization of the gene encoding a rice endosperm-specific ADPglucose pyrophosphorylase subunit and its developmental pattern of transcription.</title>
        <authorList>
            <person name="Anderson J.M."/>
            <person name="Larsen R."/>
            <person name="Laudencia D."/>
            <person name="Kim W.T."/>
            <person name="Morrow D."/>
            <person name="Okita T.W."/>
            <person name="Preiss J."/>
        </authorList>
    </citation>
    <scope>NUCLEOTIDE SEQUENCE [GENOMIC DNA]</scope>
    <source>
        <tissue>Endosperm</tissue>
    </source>
</reference>
<reference key="3">
    <citation type="submission" date="1996-02" db="EMBL/GenBank/DDBJ databases">
        <title>Isolation of cDNAs for a large and small subunits of an ADP-glucose pyrophosphorylase in rice: structure, expression and evolution.</title>
        <authorList>
            <person name="Satozawa T."/>
            <person name="Akagi H."/>
            <person name="Sakamoto M."/>
            <person name="Kawasaki T."/>
            <person name="Shimada H."/>
            <person name="Fujimura T."/>
        </authorList>
    </citation>
    <scope>NUCLEOTIDE SEQUENCE [MRNA] (ISOFORM 2)</scope>
    <source>
        <strain>cv. Nipponbare</strain>
    </source>
</reference>
<reference key="4">
    <citation type="submission" date="2006-11" db="EMBL/GenBank/DDBJ databases">
        <title>Molecular cloning of ADP-glucose pyrophosphorylase genes in rice seeds.</title>
        <authorList>
            <person name="Yoon U.H."/>
            <person name="Kim Y.H."/>
        </authorList>
    </citation>
    <scope>NUCLEOTIDE SEQUENCE [MRNA] (ISOFORM 2)</scope>
    <source>
        <strain>cv. Ilpoombyeo</strain>
        <tissue>Seed</tissue>
    </source>
</reference>
<reference key="5">
    <citation type="submission" date="2009-04" db="EMBL/GenBank/DDBJ databases">
        <title>Oryza sativa japonica group ADP-glucose pyrophosphorylase mRNA.</title>
        <authorList>
            <person name="Yoon U.H."/>
            <person name="Lee G.S."/>
            <person name="Lee J.S."/>
            <person name="Hahn J.H."/>
            <person name="Kim C.K."/>
            <person name="Lee J.H."/>
            <person name="Kim Y.H."/>
        </authorList>
    </citation>
    <scope>NUCLEOTIDE SEQUENCE [MRNA] (ISOFORM 1)</scope>
    <source>
        <strain>cv. Ilpoombyeo</strain>
        <tissue>Seed</tissue>
    </source>
</reference>
<reference key="6">
    <citation type="journal article" date="2005" name="Nature">
        <title>The map-based sequence of the rice genome.</title>
        <authorList>
            <consortium name="International rice genome sequencing project (IRGSP)"/>
        </authorList>
    </citation>
    <scope>NUCLEOTIDE SEQUENCE [LARGE SCALE GENOMIC DNA]</scope>
    <source>
        <strain>cv. Nipponbare</strain>
    </source>
</reference>
<reference key="7">
    <citation type="journal article" date="2008" name="Nucleic Acids Res.">
        <title>The rice annotation project database (RAP-DB): 2008 update.</title>
        <authorList>
            <consortium name="The rice annotation project (RAP)"/>
        </authorList>
    </citation>
    <scope>GENOME REANNOTATION</scope>
    <source>
        <strain>cv. Nipponbare</strain>
    </source>
</reference>
<reference key="8">
    <citation type="journal article" date="2013" name="Rice">
        <title>Improvement of the Oryza sativa Nipponbare reference genome using next generation sequence and optical map data.</title>
        <authorList>
            <person name="Kawahara Y."/>
            <person name="de la Bastide M."/>
            <person name="Hamilton J.P."/>
            <person name="Kanamori H."/>
            <person name="McCombie W.R."/>
            <person name="Ouyang S."/>
            <person name="Schwartz D.C."/>
            <person name="Tanaka T."/>
            <person name="Wu J."/>
            <person name="Zhou S."/>
            <person name="Childs K.L."/>
            <person name="Davidson R.M."/>
            <person name="Lin H."/>
            <person name="Quesada-Ocampo L."/>
            <person name="Vaillancourt B."/>
            <person name="Sakai H."/>
            <person name="Lee S.S."/>
            <person name="Kim J."/>
            <person name="Numa H."/>
            <person name="Itoh T."/>
            <person name="Buell C.R."/>
            <person name="Matsumoto T."/>
        </authorList>
    </citation>
    <scope>GENOME REANNOTATION</scope>
    <source>
        <strain>cv. Nipponbare</strain>
    </source>
</reference>
<reference key="9">
    <citation type="journal article" date="2005" name="PLoS Biol.">
        <title>The genomes of Oryza sativa: a history of duplications.</title>
        <authorList>
            <person name="Yu J."/>
            <person name="Wang J."/>
            <person name="Lin W."/>
            <person name="Li S."/>
            <person name="Li H."/>
            <person name="Zhou J."/>
            <person name="Ni P."/>
            <person name="Dong W."/>
            <person name="Hu S."/>
            <person name="Zeng C."/>
            <person name="Zhang J."/>
            <person name="Zhang Y."/>
            <person name="Li R."/>
            <person name="Xu Z."/>
            <person name="Li S."/>
            <person name="Li X."/>
            <person name="Zheng H."/>
            <person name="Cong L."/>
            <person name="Lin L."/>
            <person name="Yin J."/>
            <person name="Geng J."/>
            <person name="Li G."/>
            <person name="Shi J."/>
            <person name="Liu J."/>
            <person name="Lv H."/>
            <person name="Li J."/>
            <person name="Wang J."/>
            <person name="Deng Y."/>
            <person name="Ran L."/>
            <person name="Shi X."/>
            <person name="Wang X."/>
            <person name="Wu Q."/>
            <person name="Li C."/>
            <person name="Ren X."/>
            <person name="Wang J."/>
            <person name="Wang X."/>
            <person name="Li D."/>
            <person name="Liu D."/>
            <person name="Zhang X."/>
            <person name="Ji Z."/>
            <person name="Zhao W."/>
            <person name="Sun Y."/>
            <person name="Zhang Z."/>
            <person name="Bao J."/>
            <person name="Han Y."/>
            <person name="Dong L."/>
            <person name="Ji J."/>
            <person name="Chen P."/>
            <person name="Wu S."/>
            <person name="Liu J."/>
            <person name="Xiao Y."/>
            <person name="Bu D."/>
            <person name="Tan J."/>
            <person name="Yang L."/>
            <person name="Ye C."/>
            <person name="Zhang J."/>
            <person name="Xu J."/>
            <person name="Zhou Y."/>
            <person name="Yu Y."/>
            <person name="Zhang B."/>
            <person name="Zhuang S."/>
            <person name="Wei H."/>
            <person name="Liu B."/>
            <person name="Lei M."/>
            <person name="Yu H."/>
            <person name="Li Y."/>
            <person name="Xu H."/>
            <person name="Wei S."/>
            <person name="He X."/>
            <person name="Fang L."/>
            <person name="Zhang Z."/>
            <person name="Zhang Y."/>
            <person name="Huang X."/>
            <person name="Su Z."/>
            <person name="Tong W."/>
            <person name="Li J."/>
            <person name="Tong Z."/>
            <person name="Li S."/>
            <person name="Ye J."/>
            <person name="Wang L."/>
            <person name="Fang L."/>
            <person name="Lei T."/>
            <person name="Chen C.-S."/>
            <person name="Chen H.-C."/>
            <person name="Xu Z."/>
            <person name="Li H."/>
            <person name="Huang H."/>
            <person name="Zhang F."/>
            <person name="Xu H."/>
            <person name="Li N."/>
            <person name="Zhao C."/>
            <person name="Li S."/>
            <person name="Dong L."/>
            <person name="Huang Y."/>
            <person name="Li L."/>
            <person name="Xi Y."/>
            <person name="Qi Q."/>
            <person name="Li W."/>
            <person name="Zhang B."/>
            <person name="Hu W."/>
            <person name="Zhang Y."/>
            <person name="Tian X."/>
            <person name="Jiao Y."/>
            <person name="Liang X."/>
            <person name="Jin J."/>
            <person name="Gao L."/>
            <person name="Zheng W."/>
            <person name="Hao B."/>
            <person name="Liu S.-M."/>
            <person name="Wang W."/>
            <person name="Yuan L."/>
            <person name="Cao M."/>
            <person name="McDermott J."/>
            <person name="Samudrala R."/>
            <person name="Wang J."/>
            <person name="Wong G.K.-S."/>
            <person name="Yang H."/>
        </authorList>
    </citation>
    <scope>NUCLEOTIDE SEQUENCE [LARGE SCALE GENOMIC DNA]</scope>
    <source>
        <strain>cv. Nipponbare</strain>
    </source>
</reference>
<reference key="10">
    <citation type="journal article" date="2003" name="Science">
        <title>Collection, mapping, and annotation of over 28,000 cDNA clones from japonica rice.</title>
        <authorList>
            <consortium name="The rice full-length cDNA consortium"/>
        </authorList>
    </citation>
    <scope>NUCLEOTIDE SEQUENCE [LARGE SCALE MRNA] (ISOFORMS 1 AND 2)</scope>
    <source>
        <strain>cv. Nipponbare</strain>
    </source>
</reference>
<reference key="11">
    <citation type="submission" date="2001-05" db="EMBL/GenBank/DDBJ databases">
        <title>Expression and regulation of genes involved in carbohydrate metabolism in rice.</title>
        <authorList>
            <person name="Lee D.-S."/>
            <person name="Hur Y."/>
        </authorList>
    </citation>
    <scope>NUCLEOTIDE SEQUENCE [MRNA] OF 204-293</scope>
</reference>
<reference key="12">
    <citation type="journal article" date="2005" name="Plant Cell Physiol.">
        <title>Gene expression of ADP-glucose pyrophosphorylase and starch contents in rice cultured cells are cooperatively regulated by sucrose and ABA.</title>
        <authorList>
            <person name="Akihiro T."/>
            <person name="Mizuno K."/>
            <person name="Fujimura T."/>
        </authorList>
    </citation>
    <scope>TISSUE SPECIFICITY</scope>
    <scope>DEVELOPMENTAL STAGE</scope>
</reference>
<reference key="13">
    <citation type="journal article" date="2007" name="Plant Mol. Biol.">
        <title>Identification of the ADP-glucose pyrophosphorylase isoforms essential for starch synthesis in the leaf and seed endosperm of rice (Oryza sativa L.).</title>
        <authorList>
            <person name="Lee S.K."/>
            <person name="Hwang S.K."/>
            <person name="Han M."/>
            <person name="Eom J.S."/>
            <person name="Kang H.G."/>
            <person name="Han Y."/>
            <person name="Choi S.B."/>
            <person name="Cho M.H."/>
            <person name="Bhoo S.H."/>
            <person name="An G."/>
            <person name="Hahn T.R."/>
            <person name="Okita T.W."/>
            <person name="Jeon J.S."/>
        </authorList>
    </citation>
    <scope>FUNCTION</scope>
    <scope>SUBCELLULAR LOCATION</scope>
    <scope>DISRUPTION PHENOTYPE</scope>
</reference>
<reference key="14">
    <citation type="journal article" date="2014" name="Plant Cell Physiol.">
        <title>The rice endosperm ADP-glucose pyrophosphorylase large subunit is essential for optimal catalysis and allosteric regulation of the heterotetrameric enzyme.</title>
        <authorList>
            <person name="Tuncel A."/>
            <person name="Kawaguchi J."/>
            <person name="Ihara Y."/>
            <person name="Matsusaka H."/>
            <person name="Nishi A."/>
            <person name="Nakamura T."/>
            <person name="Kuhara S."/>
            <person name="Hirakawa H."/>
            <person name="Nakamura Y."/>
            <person name="Cakir B."/>
            <person name="Nagamine A."/>
            <person name="Okita T.W."/>
            <person name="Hwang S.K."/>
            <person name="Satoh H."/>
        </authorList>
    </citation>
    <scope>FUNCTION</scope>
    <scope>CATALYTIC ACTIVITY</scope>
    <scope>ACTIVITY REGULATION</scope>
    <scope>SUBUNIT</scope>
</reference>
<organism>
    <name type="scientific">Oryza sativa subsp. japonica</name>
    <name type="common">Rice</name>
    <dbReference type="NCBI Taxonomy" id="39947"/>
    <lineage>
        <taxon>Eukaryota</taxon>
        <taxon>Viridiplantae</taxon>
        <taxon>Streptophyta</taxon>
        <taxon>Embryophyta</taxon>
        <taxon>Tracheophyta</taxon>
        <taxon>Spermatophyta</taxon>
        <taxon>Magnoliopsida</taxon>
        <taxon>Liliopsida</taxon>
        <taxon>Poales</taxon>
        <taxon>Poaceae</taxon>
        <taxon>BOP clade</taxon>
        <taxon>Oryzoideae</taxon>
        <taxon>Oryzeae</taxon>
        <taxon>Oryzinae</taxon>
        <taxon>Oryza</taxon>
        <taxon>Oryza sativa</taxon>
    </lineage>
</organism>
<sequence>MAMAAAMGVASPYHAAHAAASTSCDSLRLLVAEGRPRRPRGVASSSSSSSSAGRRRRPLVFSPRAVSDSKSSQTCLDPDASTSVLGIILGGGAGTRLYPLTKKRAKPAVPLGANYRLIDIPVSNCLNSNISKIYVLTQFNSASLNRHLSRAYGNNIGGYKNEGFVEVLAAQQSPDNPNWFQGTADAVRQYLWLFEEHNVMEFLILAGDHLYRMDYEKFIQAHRETDSDITVAALPMDEKRATAFGLMKIDEEGRIVEFAEKPKGEQLKAMMVDTTILGLDDVRAKEMPYIASMGIYVISKNVMLQLLREQFPGANDFGSEVIPGATNIGMRVQAYLYDGYWEDIGTIEAFYNANLGITKKPVPDFSFYDRSAPIYTQPRHLPPSKVLDADVTDSVIGEGCVIKNCKIHHSVVGLRSCISEGAIIEDSLLMGADYYETEADKKLLGEKGGIPIGIGKNCHIRRAIIDKNARIGDNVKIINVDNVQEAARETDGYFIKSGIVTVIKDALLPSGTVI</sequence>
<accession>P15280</accession>
<accession>A3BS75</accession>
<accession>A8ASG3</accession>
<accession>Q0J698</accession>
<accession>Q7EZW3</accession>
<accession>Q84QT8</accession>
<accession>Q94JM6</accession>
<comment type="function">
    <text evidence="4">Involved in synthesis of starch. Catalyzes the synthesis of ADP-glucose, a molecule that serves as an activated glycosyl donor for alpha-1,4-glucan synthesis. The chloroplastic isoform 1 is essential for starch synthesis in leaf chloroplasts and the cytosolic isoform 2 for synthesis in seed endosperm.</text>
</comment>
<comment type="catalytic activity">
    <reaction evidence="5">
        <text>alpha-D-glucose 1-phosphate + ATP + H(+) = ADP-alpha-D-glucose + diphosphate</text>
        <dbReference type="Rhea" id="RHEA:12120"/>
        <dbReference type="ChEBI" id="CHEBI:15378"/>
        <dbReference type="ChEBI" id="CHEBI:30616"/>
        <dbReference type="ChEBI" id="CHEBI:33019"/>
        <dbReference type="ChEBI" id="CHEBI:57498"/>
        <dbReference type="ChEBI" id="CHEBI:58601"/>
        <dbReference type="EC" id="2.7.7.27"/>
    </reaction>
</comment>
<comment type="activity regulation">
    <text evidence="5">Activated by 3'phosphoglycerate, inhibited by orthophosphate. Allosteric regulation. Inhibited by inorganic phosphate (Pi).</text>
</comment>
<comment type="pathway">
    <text evidence="12">Glycan biosynthesis; starch biosynthesis.</text>
</comment>
<comment type="subunit">
    <text evidence="5">Heterotetramer composed of two small and two large subunits.</text>
</comment>
<comment type="subcellular location">
    <molecule>Isoform 1</molecule>
    <subcellularLocation>
        <location evidence="4">Plastid</location>
        <location evidence="4">Chloroplast</location>
    </subcellularLocation>
    <subcellularLocation>
        <location evidence="13">Plastid</location>
        <location evidence="13">Amyloplast</location>
    </subcellularLocation>
    <text evidence="13">Found in the chloroplast in leaf. Found in the plastid in the developing endosperm.</text>
</comment>
<comment type="subcellular location">
    <molecule>Isoform 2</molecule>
    <subcellularLocation>
        <location evidence="4">Cytoplasm</location>
        <location evidence="4">Cytosol</location>
    </subcellularLocation>
</comment>
<comment type="alternative products">
    <event type="alternative splicing"/>
    <isoform>
        <id>P15280-1</id>
        <name>1</name>
        <name evidence="8">OSAGPS2A</name>
        <sequence type="displayed"/>
    </isoform>
    <isoform>
        <id>P15280-2</id>
        <name>2</name>
        <name evidence="8">OSAGPS2B</name>
        <sequence type="described" ref="VSP_017511"/>
    </isoform>
</comment>
<comment type="tissue specificity">
    <text evidence="3">Expressed in leaves.</text>
</comment>
<comment type="developmental stage">
    <text evidence="3">Expressed in developing seeds from 1 to 15 days after flowering (DAF).</text>
</comment>
<comment type="disruption phenotype">
    <text evidence="4">Shrunken seed endosperm due to a strong reduction in starch synthesis.</text>
</comment>
<comment type="similarity">
    <text evidence="12">Belongs to the bacterial/plant glucose-1-phosphate adenylyltransferase family.</text>
</comment>
<comment type="sequence caution" evidence="12">
    <conflict type="frameshift">
        <sequence resource="EMBL-CDS" id="AAA33890"/>
    </conflict>
</comment>
<comment type="sequence caution" evidence="12">
    <conflict type="frameshift">
        <sequence resource="EMBL-CDS" id="AAA33891"/>
    </conflict>
</comment>
<name>GLGS2_ORYSJ</name>
<dbReference type="EC" id="2.7.7.27" evidence="5"/>
<dbReference type="EMBL" id="J04960">
    <property type="protein sequence ID" value="AAA33890.1"/>
    <property type="status" value="ALT_FRAME"/>
    <property type="molecule type" value="mRNA"/>
</dbReference>
<dbReference type="EMBL" id="M31616">
    <property type="protein sequence ID" value="AAA33891.1"/>
    <property type="status" value="ALT_FRAME"/>
    <property type="molecule type" value="Genomic_DNA"/>
</dbReference>
<dbReference type="EMBL" id="D83539">
    <property type="protein sequence ID" value="BAF80188.1"/>
    <property type="molecule type" value="mRNA"/>
</dbReference>
<dbReference type="EMBL" id="EF122437">
    <property type="protein sequence ID" value="ABL74524.1"/>
    <property type="molecule type" value="mRNA"/>
</dbReference>
<dbReference type="EMBL" id="FJ940194">
    <property type="protein sequence ID" value="ADB84616.1"/>
    <property type="molecule type" value="mRNA"/>
</dbReference>
<dbReference type="EMBL" id="AP004459">
    <property type="protein sequence ID" value="BAC75439.1"/>
    <property type="molecule type" value="Genomic_DNA"/>
</dbReference>
<dbReference type="EMBL" id="AP004459">
    <property type="protein sequence ID" value="BAD01700.1"/>
    <property type="molecule type" value="Genomic_DNA"/>
</dbReference>
<dbReference type="EMBL" id="AP008214">
    <property type="protein sequence ID" value="BAF23517.1"/>
    <property type="molecule type" value="Genomic_DNA"/>
</dbReference>
<dbReference type="EMBL" id="AP014964">
    <property type="protein sequence ID" value="BAT05034.1"/>
    <property type="molecule type" value="Genomic_DNA"/>
</dbReference>
<dbReference type="EMBL" id="AP014964">
    <property type="protein sequence ID" value="BAT05035.1"/>
    <property type="molecule type" value="Genomic_DNA"/>
</dbReference>
<dbReference type="EMBL" id="CM000145">
    <property type="protein sequence ID" value="EAZ42414.1"/>
    <property type="molecule type" value="Genomic_DNA"/>
</dbReference>
<dbReference type="EMBL" id="AK071826">
    <property type="status" value="NOT_ANNOTATED_CDS"/>
    <property type="molecule type" value="mRNA"/>
</dbReference>
<dbReference type="EMBL" id="AK103906">
    <property type="status" value="NOT_ANNOTATED_CDS"/>
    <property type="molecule type" value="mRNA"/>
</dbReference>
<dbReference type="EMBL" id="AF378188">
    <property type="protein sequence ID" value="AAK54859.1"/>
    <property type="molecule type" value="mRNA"/>
</dbReference>
<dbReference type="PIR" id="A34318">
    <property type="entry name" value="A34318"/>
</dbReference>
<dbReference type="PIR" id="JU0444">
    <property type="entry name" value="JU0444"/>
</dbReference>
<dbReference type="RefSeq" id="NP_001390460.1">
    <molecule id="P15280-1"/>
    <property type="nucleotide sequence ID" value="NM_001403531.1"/>
</dbReference>
<dbReference type="RefSeq" id="NP_001390461.1">
    <molecule id="P15280-2"/>
    <property type="nucleotide sequence ID" value="NM_001403532.1"/>
</dbReference>
<dbReference type="RefSeq" id="XP_015650970.1">
    <property type="nucleotide sequence ID" value="XM_015795484.1"/>
</dbReference>
<dbReference type="RefSeq" id="XP_015650971.1">
    <property type="nucleotide sequence ID" value="XM_015795485.1"/>
</dbReference>
<dbReference type="SMR" id="P15280"/>
<dbReference type="BioGRID" id="814376">
    <property type="interactions" value="1"/>
</dbReference>
<dbReference type="FunCoup" id="P15280">
    <property type="interactions" value="1031"/>
</dbReference>
<dbReference type="STRING" id="39947.P15280"/>
<dbReference type="PaxDb" id="39947-P15280"/>
<dbReference type="EnsemblPlants" id="Os08t0345800-02">
    <molecule id="P15280-1"/>
    <property type="protein sequence ID" value="Os08t0345800-02"/>
    <property type="gene ID" value="Os08g0345800"/>
</dbReference>
<dbReference type="GeneID" id="4345339"/>
<dbReference type="Gramene" id="Os08t0345800-02">
    <molecule id="P15280-1"/>
    <property type="protein sequence ID" value="Os08t0345800-02"/>
    <property type="gene ID" value="Os08g0345800"/>
</dbReference>
<dbReference type="KEGG" id="dosa:Os08g0345800"/>
<dbReference type="eggNOG" id="KOG1322">
    <property type="taxonomic scope" value="Eukaryota"/>
</dbReference>
<dbReference type="InParanoid" id="P15280"/>
<dbReference type="OMA" id="YPLTKMR"/>
<dbReference type="OrthoDB" id="1733332at2759"/>
<dbReference type="BRENDA" id="2.7.7.27">
    <property type="organism ID" value="4460"/>
</dbReference>
<dbReference type="PlantReactome" id="R-OSA-1119477">
    <property type="pathway name" value="Starch biosynthesis"/>
</dbReference>
<dbReference type="UniPathway" id="UPA00152"/>
<dbReference type="Proteomes" id="UP000000763">
    <property type="component" value="Chromosome 8"/>
</dbReference>
<dbReference type="Proteomes" id="UP000007752">
    <property type="component" value="Chromosome 8"/>
</dbReference>
<dbReference type="Proteomes" id="UP000059680">
    <property type="component" value="Chromosome 8"/>
</dbReference>
<dbReference type="ExpressionAtlas" id="P15280">
    <property type="expression patterns" value="baseline and differential"/>
</dbReference>
<dbReference type="GO" id="GO:0009501">
    <property type="term" value="C:amyloplast"/>
    <property type="evidence" value="ECO:0007669"/>
    <property type="project" value="UniProtKB-SubCell"/>
</dbReference>
<dbReference type="GO" id="GO:0009507">
    <property type="term" value="C:chloroplast"/>
    <property type="evidence" value="ECO:0007669"/>
    <property type="project" value="UniProtKB-SubCell"/>
</dbReference>
<dbReference type="GO" id="GO:0005829">
    <property type="term" value="C:cytosol"/>
    <property type="evidence" value="ECO:0007669"/>
    <property type="project" value="UniProtKB-SubCell"/>
</dbReference>
<dbReference type="GO" id="GO:0005524">
    <property type="term" value="F:ATP binding"/>
    <property type="evidence" value="ECO:0007669"/>
    <property type="project" value="UniProtKB-KW"/>
</dbReference>
<dbReference type="GO" id="GO:0008878">
    <property type="term" value="F:glucose-1-phosphate adenylyltransferase activity"/>
    <property type="evidence" value="ECO:0007669"/>
    <property type="project" value="UniProtKB-EC"/>
</dbReference>
<dbReference type="GO" id="GO:0005978">
    <property type="term" value="P:glycogen biosynthetic process"/>
    <property type="evidence" value="ECO:0007669"/>
    <property type="project" value="InterPro"/>
</dbReference>
<dbReference type="GO" id="GO:0019252">
    <property type="term" value="P:starch biosynthetic process"/>
    <property type="evidence" value="ECO:0007669"/>
    <property type="project" value="UniProtKB-UniPathway"/>
</dbReference>
<dbReference type="GO" id="GO:0005982">
    <property type="term" value="P:starch metabolic process"/>
    <property type="evidence" value="ECO:0000270"/>
    <property type="project" value="Gramene"/>
</dbReference>
<dbReference type="CDD" id="cd02508">
    <property type="entry name" value="ADP_Glucose_PP"/>
    <property type="match status" value="1"/>
</dbReference>
<dbReference type="CDD" id="cd04651">
    <property type="entry name" value="LbH_G1P_AT_C"/>
    <property type="match status" value="1"/>
</dbReference>
<dbReference type="FunFam" id="2.160.10.10:FF:000010">
    <property type="entry name" value="Glucose-1-phosphate adenylyltransferase"/>
    <property type="match status" value="1"/>
</dbReference>
<dbReference type="FunFam" id="3.90.550.10:FF:000030">
    <property type="entry name" value="Glucose-1-phosphate adenylyltransferase"/>
    <property type="match status" value="1"/>
</dbReference>
<dbReference type="Gene3D" id="2.160.10.10">
    <property type="entry name" value="Hexapeptide repeat proteins"/>
    <property type="match status" value="1"/>
</dbReference>
<dbReference type="Gene3D" id="3.90.550.10">
    <property type="entry name" value="Spore Coat Polysaccharide Biosynthesis Protein SpsA, Chain A"/>
    <property type="match status" value="1"/>
</dbReference>
<dbReference type="InterPro" id="IPR011831">
    <property type="entry name" value="ADP-Glc_PPase"/>
</dbReference>
<dbReference type="InterPro" id="IPR005836">
    <property type="entry name" value="ADP_Glu_pyroP_CS"/>
</dbReference>
<dbReference type="InterPro" id="IPR005835">
    <property type="entry name" value="NTP_transferase_dom"/>
</dbReference>
<dbReference type="InterPro" id="IPR029044">
    <property type="entry name" value="Nucleotide-diphossugar_trans"/>
</dbReference>
<dbReference type="InterPro" id="IPR011004">
    <property type="entry name" value="Trimer_LpxA-like_sf"/>
</dbReference>
<dbReference type="NCBIfam" id="TIGR02091">
    <property type="entry name" value="glgC"/>
    <property type="match status" value="1"/>
</dbReference>
<dbReference type="NCBIfam" id="NF002772">
    <property type="entry name" value="PRK02862.1"/>
    <property type="match status" value="1"/>
</dbReference>
<dbReference type="PANTHER" id="PTHR43523:SF12">
    <property type="entry name" value="GLUCOSE-1-PHOSPHATE ADENYLYLTRANSFERASE LARGE SUBUNIT 1, CHLOROPLASTIC-RELATED"/>
    <property type="match status" value="1"/>
</dbReference>
<dbReference type="PANTHER" id="PTHR43523">
    <property type="entry name" value="GLUCOSE-1-PHOSPHATE ADENYLYLTRANSFERASE-RELATED"/>
    <property type="match status" value="1"/>
</dbReference>
<dbReference type="Pfam" id="PF25247">
    <property type="entry name" value="LbH_GLGC"/>
    <property type="match status" value="1"/>
</dbReference>
<dbReference type="Pfam" id="PF00483">
    <property type="entry name" value="NTP_transferase"/>
    <property type="match status" value="1"/>
</dbReference>
<dbReference type="SUPFAM" id="SSF53448">
    <property type="entry name" value="Nucleotide-diphospho-sugar transferases"/>
    <property type="match status" value="1"/>
</dbReference>
<dbReference type="SUPFAM" id="SSF51161">
    <property type="entry name" value="Trimeric LpxA-like enzymes"/>
    <property type="match status" value="1"/>
</dbReference>
<dbReference type="PROSITE" id="PS00808">
    <property type="entry name" value="ADP_GLC_PYROPHOSPH_1"/>
    <property type="match status" value="1"/>
</dbReference>
<dbReference type="PROSITE" id="PS00809">
    <property type="entry name" value="ADP_GLC_PYROPHOSPH_2"/>
    <property type="match status" value="1"/>
</dbReference>
<dbReference type="PROSITE" id="PS00810">
    <property type="entry name" value="ADP_GLC_PYROPHOSPH_3"/>
    <property type="match status" value="1"/>
</dbReference>
<gene>
    <name evidence="8" type="primary">AGPS2</name>
    <name evidence="7" type="synonym">APS2</name>
    <name evidence="16" type="ordered locus">Os08g0345800</name>
    <name evidence="12" type="ordered locus">LOC_Os08g25734</name>
    <name evidence="17" type="ORF">OsJ_26991</name>
    <name evidence="14" type="ORF">P0410E11.123-1</name>
    <name evidence="15" type="ORF">P0410E11.123-2</name>
</gene>
<proteinExistence type="evidence at protein level"/>
<feature type="transit peptide" description="Chloroplast" evidence="1">
    <location>
        <begin position="1"/>
        <end position="64"/>
    </location>
</feature>
<feature type="chain" id="PRO_0000011154" description="Glucose-1-phosphate adenylyltransferase small subunit 2, chloroplastic/amyloplastic/cytosolic">
    <location>
        <begin position="65"/>
        <end position="514"/>
    </location>
</feature>
<feature type="region of interest" description="Disordered" evidence="2">
    <location>
        <begin position="35"/>
        <end position="74"/>
    </location>
</feature>
<feature type="compositionally biased region" description="Low complexity" evidence="2">
    <location>
        <begin position="41"/>
        <end position="52"/>
    </location>
</feature>
<feature type="splice variant" id="VSP_017511" description="In isoform 2." evidence="6 9 10 11">
    <original>MAMAAAMGVASPYHAAHAAASTSCDSLRLLVAEGRPRRPRGVASSSSSSSSAGRRRRPLVFSPRAVSDSKSSQTCLDPDAST</original>
    <variation>MNVLASKIFPSRSNVASEQQQSKREKATIDDAKNSSKNKNLDRSVDE</variation>
    <location>
        <begin position="1"/>
        <end position="82"/>
    </location>
</feature>
<feature type="sequence conflict" description="In Ref. 1; AAA33890." evidence="12" ref="1">
    <original>L</original>
    <variation>P</variation>
    <location>
        <position position="144"/>
    </location>
</feature>
<feature type="sequence conflict" description="In Ref. 2; AAA33891." evidence="12" ref="2">
    <original>A</original>
    <variation>V</variation>
    <location>
        <position position="169"/>
    </location>
</feature>
<feature type="sequence conflict" description="In Ref. 1; AAA33890." evidence="12" ref="1">
    <original>A</original>
    <variation>V</variation>
    <location sequence="P15280-2">
        <position position="16"/>
    </location>
</feature>
<evidence type="ECO:0000255" key="1"/>
<evidence type="ECO:0000256" key="2">
    <source>
        <dbReference type="SAM" id="MobiDB-lite"/>
    </source>
</evidence>
<evidence type="ECO:0000269" key="3">
    <source>
    </source>
</evidence>
<evidence type="ECO:0000269" key="4">
    <source>
    </source>
</evidence>
<evidence type="ECO:0000269" key="5">
    <source>
    </source>
</evidence>
<evidence type="ECO:0000303" key="6">
    <source>
    </source>
</evidence>
<evidence type="ECO:0000303" key="7">
    <source>
    </source>
</evidence>
<evidence type="ECO:0000303" key="8">
    <source>
    </source>
</evidence>
<evidence type="ECO:0000303" key="9">
    <source>
    </source>
</evidence>
<evidence type="ECO:0000303" key="10">
    <source ref="3"/>
</evidence>
<evidence type="ECO:0000303" key="11">
    <source ref="4"/>
</evidence>
<evidence type="ECO:0000305" key="12"/>
<evidence type="ECO:0000305" key="13">
    <source>
    </source>
</evidence>
<evidence type="ECO:0000312" key="14">
    <source>
        <dbReference type="EMBL" id="BAC75439.1"/>
    </source>
</evidence>
<evidence type="ECO:0000312" key="15">
    <source>
        <dbReference type="EMBL" id="BAD01700.1"/>
    </source>
</evidence>
<evidence type="ECO:0000312" key="16">
    <source>
        <dbReference type="EMBL" id="BAT05035.1"/>
    </source>
</evidence>
<evidence type="ECO:0000312" key="17">
    <source>
        <dbReference type="EMBL" id="EAZ42414.1"/>
    </source>
</evidence>